<feature type="chain" id="PRO_0000066038" description="Protein XpaC">
    <location>
        <begin position="1"/>
        <end position="204"/>
    </location>
</feature>
<reference key="1">
    <citation type="submission" date="1992-06" db="EMBL/GenBank/DDBJ databases">
        <title>Characterization of the Bacillus subtilis xpaC gene, which in double copy causes aberrant cell morphology, filamentation and inhibits sporulation.</title>
        <authorList>
            <person name="Bookstein C."/>
            <person name="Edwards C.W."/>
            <person name="Hulett F.M."/>
        </authorList>
    </citation>
    <scope>NUCLEOTIDE SEQUENCE [GENOMIC DNA]</scope>
    <source>
        <strain>168</strain>
    </source>
</reference>
<reference key="2">
    <citation type="journal article" date="1994" name="DNA Res.">
        <title>Systematic sequencing of the 180 kilobase region of the Bacillus subtilis chromosome containing the replication origin.</title>
        <authorList>
            <person name="Ogasawara N."/>
            <person name="Nakai S."/>
            <person name="Yoshikawa H."/>
        </authorList>
    </citation>
    <scope>NUCLEOTIDE SEQUENCE [GENOMIC DNA]</scope>
    <source>
        <strain>168</strain>
    </source>
</reference>
<reference key="3">
    <citation type="journal article" date="1997" name="Nature">
        <title>The complete genome sequence of the Gram-positive bacterium Bacillus subtilis.</title>
        <authorList>
            <person name="Kunst F."/>
            <person name="Ogasawara N."/>
            <person name="Moszer I."/>
            <person name="Albertini A.M."/>
            <person name="Alloni G."/>
            <person name="Azevedo V."/>
            <person name="Bertero M.G."/>
            <person name="Bessieres P."/>
            <person name="Bolotin A."/>
            <person name="Borchert S."/>
            <person name="Borriss R."/>
            <person name="Boursier L."/>
            <person name="Brans A."/>
            <person name="Braun M."/>
            <person name="Brignell S.C."/>
            <person name="Bron S."/>
            <person name="Brouillet S."/>
            <person name="Bruschi C.V."/>
            <person name="Caldwell B."/>
            <person name="Capuano V."/>
            <person name="Carter N.M."/>
            <person name="Choi S.-K."/>
            <person name="Codani J.-J."/>
            <person name="Connerton I.F."/>
            <person name="Cummings N.J."/>
            <person name="Daniel R.A."/>
            <person name="Denizot F."/>
            <person name="Devine K.M."/>
            <person name="Duesterhoeft A."/>
            <person name="Ehrlich S.D."/>
            <person name="Emmerson P.T."/>
            <person name="Entian K.-D."/>
            <person name="Errington J."/>
            <person name="Fabret C."/>
            <person name="Ferrari E."/>
            <person name="Foulger D."/>
            <person name="Fritz C."/>
            <person name="Fujita M."/>
            <person name="Fujita Y."/>
            <person name="Fuma S."/>
            <person name="Galizzi A."/>
            <person name="Galleron N."/>
            <person name="Ghim S.-Y."/>
            <person name="Glaser P."/>
            <person name="Goffeau A."/>
            <person name="Golightly E.J."/>
            <person name="Grandi G."/>
            <person name="Guiseppi G."/>
            <person name="Guy B.J."/>
            <person name="Haga K."/>
            <person name="Haiech J."/>
            <person name="Harwood C.R."/>
            <person name="Henaut A."/>
            <person name="Hilbert H."/>
            <person name="Holsappel S."/>
            <person name="Hosono S."/>
            <person name="Hullo M.-F."/>
            <person name="Itaya M."/>
            <person name="Jones L.-M."/>
            <person name="Joris B."/>
            <person name="Karamata D."/>
            <person name="Kasahara Y."/>
            <person name="Klaerr-Blanchard M."/>
            <person name="Klein C."/>
            <person name="Kobayashi Y."/>
            <person name="Koetter P."/>
            <person name="Koningstein G."/>
            <person name="Krogh S."/>
            <person name="Kumano M."/>
            <person name="Kurita K."/>
            <person name="Lapidus A."/>
            <person name="Lardinois S."/>
            <person name="Lauber J."/>
            <person name="Lazarevic V."/>
            <person name="Lee S.-M."/>
            <person name="Levine A."/>
            <person name="Liu H."/>
            <person name="Masuda S."/>
            <person name="Mauel C."/>
            <person name="Medigue C."/>
            <person name="Medina N."/>
            <person name="Mellado R.P."/>
            <person name="Mizuno M."/>
            <person name="Moestl D."/>
            <person name="Nakai S."/>
            <person name="Noback M."/>
            <person name="Noone D."/>
            <person name="O'Reilly M."/>
            <person name="Ogawa K."/>
            <person name="Ogiwara A."/>
            <person name="Oudega B."/>
            <person name="Park S.-H."/>
            <person name="Parro V."/>
            <person name="Pohl T.M."/>
            <person name="Portetelle D."/>
            <person name="Porwollik S."/>
            <person name="Prescott A.M."/>
            <person name="Presecan E."/>
            <person name="Pujic P."/>
            <person name="Purnelle B."/>
            <person name="Rapoport G."/>
            <person name="Rey M."/>
            <person name="Reynolds S."/>
            <person name="Rieger M."/>
            <person name="Rivolta C."/>
            <person name="Rocha E."/>
            <person name="Roche B."/>
            <person name="Rose M."/>
            <person name="Sadaie Y."/>
            <person name="Sato T."/>
            <person name="Scanlan E."/>
            <person name="Schleich S."/>
            <person name="Schroeter R."/>
            <person name="Scoffone F."/>
            <person name="Sekiguchi J."/>
            <person name="Sekowska A."/>
            <person name="Seror S.J."/>
            <person name="Serror P."/>
            <person name="Shin B.-S."/>
            <person name="Soldo B."/>
            <person name="Sorokin A."/>
            <person name="Tacconi E."/>
            <person name="Takagi T."/>
            <person name="Takahashi H."/>
            <person name="Takemaru K."/>
            <person name="Takeuchi M."/>
            <person name="Tamakoshi A."/>
            <person name="Tanaka T."/>
            <person name="Terpstra P."/>
            <person name="Tognoni A."/>
            <person name="Tosato V."/>
            <person name="Uchiyama S."/>
            <person name="Vandenbol M."/>
            <person name="Vannier F."/>
            <person name="Vassarotti A."/>
            <person name="Viari A."/>
            <person name="Wambutt R."/>
            <person name="Wedler E."/>
            <person name="Wedler H."/>
            <person name="Weitzenegger T."/>
            <person name="Winters P."/>
            <person name="Wipat A."/>
            <person name="Yamamoto H."/>
            <person name="Yamane K."/>
            <person name="Yasumoto K."/>
            <person name="Yata K."/>
            <person name="Yoshida K."/>
            <person name="Yoshikawa H.-F."/>
            <person name="Zumstein E."/>
            <person name="Yoshikawa H."/>
            <person name="Danchin A."/>
        </authorList>
    </citation>
    <scope>NUCLEOTIDE SEQUENCE [LARGE SCALE GENOMIC DNA]</scope>
    <source>
        <strain>168</strain>
    </source>
</reference>
<proteinExistence type="predicted"/>
<dbReference type="EMBL" id="M96156">
    <property type="protein sequence ID" value="AAA22891.1"/>
    <property type="molecule type" value="Genomic_DNA"/>
</dbReference>
<dbReference type="EMBL" id="D26185">
    <property type="protein sequence ID" value="BAA05261.1"/>
    <property type="molecule type" value="Genomic_DNA"/>
</dbReference>
<dbReference type="EMBL" id="AL009126">
    <property type="protein sequence ID" value="CAB11801.1"/>
    <property type="molecule type" value="Genomic_DNA"/>
</dbReference>
<dbReference type="PIR" id="S27526">
    <property type="entry name" value="S27526"/>
</dbReference>
<dbReference type="RefSeq" id="NP_387906.1">
    <property type="nucleotide sequence ID" value="NC_000964.3"/>
</dbReference>
<dbReference type="RefSeq" id="WP_003242630.1">
    <property type="nucleotide sequence ID" value="NZ_OZ025638.1"/>
</dbReference>
<dbReference type="SMR" id="P37467"/>
<dbReference type="FunCoup" id="P37467">
    <property type="interactions" value="2"/>
</dbReference>
<dbReference type="STRING" id="224308.BSU00250"/>
<dbReference type="PaxDb" id="224308-BSU00250"/>
<dbReference type="EnsemblBacteria" id="CAB11801">
    <property type="protein sequence ID" value="CAB11801"/>
    <property type="gene ID" value="BSU_00250"/>
</dbReference>
<dbReference type="GeneID" id="937019"/>
<dbReference type="KEGG" id="bsu:BSU00250"/>
<dbReference type="PATRIC" id="fig|224308.179.peg.25"/>
<dbReference type="eggNOG" id="COG4915">
    <property type="taxonomic scope" value="Bacteria"/>
</dbReference>
<dbReference type="InParanoid" id="P37467"/>
<dbReference type="OrthoDB" id="2081028at2"/>
<dbReference type="PhylomeDB" id="P37467"/>
<dbReference type="BioCyc" id="BSUB:BSU00250-MONOMER"/>
<dbReference type="Proteomes" id="UP000001570">
    <property type="component" value="Chromosome"/>
</dbReference>
<dbReference type="GO" id="GO:0016787">
    <property type="term" value="F:hydrolase activity"/>
    <property type="evidence" value="ECO:0007669"/>
    <property type="project" value="UniProtKB-KW"/>
</dbReference>
<dbReference type="InterPro" id="IPR018770">
    <property type="entry name" value="ChloroindolylP_hydrolase"/>
</dbReference>
<dbReference type="Pfam" id="PF10112">
    <property type="entry name" value="Halogen_Hydrol"/>
    <property type="match status" value="1"/>
</dbReference>
<accession>P37467</accession>
<keyword id="KW-0378">Hydrolase</keyword>
<keyword id="KW-1185">Reference proteome</keyword>
<sequence length="204" mass="23959">MQRFFHFLVWSLTSSATFVFIGILSFFGLNQSIFLSIVYGLASGAAVYIAGIWNARRLFLKKHELTGREYAYIKKNLEEARQKMVRLRKALFQAKSIQMFKQNAEMLRIVRRIYLLTKKEPKRFYQAERFFYQTLDSVVELTEKYAFLSSHPKKSKELSMSLSETRITLTELTKRLEEDLTQAMGDEIDELQFELDAAKHSLKK</sequence>
<name>XPAC_BACSU</name>
<protein>
    <recommendedName>
        <fullName>Protein XpaC</fullName>
    </recommendedName>
</protein>
<gene>
    <name type="primary">xpaC</name>
    <name type="ordered locus">BSU00250</name>
</gene>
<comment type="function">
    <text>In double copy it causes aberrant cell morphology, filamentation and inhibits sporulation. Hydrolyzes 5-bromo-4-chloroindolyl phosphate.</text>
</comment>
<organism>
    <name type="scientific">Bacillus subtilis (strain 168)</name>
    <dbReference type="NCBI Taxonomy" id="224308"/>
    <lineage>
        <taxon>Bacteria</taxon>
        <taxon>Bacillati</taxon>
        <taxon>Bacillota</taxon>
        <taxon>Bacilli</taxon>
        <taxon>Bacillales</taxon>
        <taxon>Bacillaceae</taxon>
        <taxon>Bacillus</taxon>
    </lineage>
</organism>